<evidence type="ECO:0000255" key="1">
    <source>
        <dbReference type="HAMAP-Rule" id="MF_01310"/>
    </source>
</evidence>
<evidence type="ECO:0000305" key="2"/>
<accession>Q1GVN5</accession>
<name>RS11_SPHAL</name>
<reference key="1">
    <citation type="journal article" date="2009" name="Proc. Natl. Acad. Sci. U.S.A.">
        <title>The genomic basis of trophic strategy in marine bacteria.</title>
        <authorList>
            <person name="Lauro F.M."/>
            <person name="McDougald D."/>
            <person name="Thomas T."/>
            <person name="Williams T.J."/>
            <person name="Egan S."/>
            <person name="Rice S."/>
            <person name="DeMaere M.Z."/>
            <person name="Ting L."/>
            <person name="Ertan H."/>
            <person name="Johnson J."/>
            <person name="Ferriera S."/>
            <person name="Lapidus A."/>
            <person name="Anderson I."/>
            <person name="Kyrpides N."/>
            <person name="Munk A.C."/>
            <person name="Detter C."/>
            <person name="Han C.S."/>
            <person name="Brown M.V."/>
            <person name="Robb F.T."/>
            <person name="Kjelleberg S."/>
            <person name="Cavicchioli R."/>
        </authorList>
    </citation>
    <scope>NUCLEOTIDE SEQUENCE [LARGE SCALE GENOMIC DNA]</scope>
    <source>
        <strain>DSM 13593 / LMG 18877 / RB2256</strain>
    </source>
</reference>
<proteinExistence type="inferred from homology"/>
<sequence length="129" mass="13960">MAREPQRLRRRERKNISSGVAHVNATFNNTMITITDAQGNAIAWSSAGMMGFKGSRKSTPYAAQVCAEDAGKKAAEHGVRTLEVEVKGPGAGRESALRALQAVGFHITSIRDVTPIPHNGVRPAKRRRV</sequence>
<feature type="chain" id="PRO_0000294860" description="Small ribosomal subunit protein uS11">
    <location>
        <begin position="1"/>
        <end position="129"/>
    </location>
</feature>
<protein>
    <recommendedName>
        <fullName evidence="1">Small ribosomal subunit protein uS11</fullName>
    </recommendedName>
    <alternativeName>
        <fullName evidence="2">30S ribosomal protein S11</fullName>
    </alternativeName>
</protein>
<keyword id="KW-1185">Reference proteome</keyword>
<keyword id="KW-0687">Ribonucleoprotein</keyword>
<keyword id="KW-0689">Ribosomal protein</keyword>
<keyword id="KW-0694">RNA-binding</keyword>
<keyword id="KW-0699">rRNA-binding</keyword>
<comment type="function">
    <text evidence="1">Located on the platform of the 30S subunit, it bridges several disparate RNA helices of the 16S rRNA. Forms part of the Shine-Dalgarno cleft in the 70S ribosome.</text>
</comment>
<comment type="subunit">
    <text evidence="1">Part of the 30S ribosomal subunit. Interacts with proteins S7 and S18. Binds to IF-3.</text>
</comment>
<comment type="similarity">
    <text evidence="1">Belongs to the universal ribosomal protein uS11 family.</text>
</comment>
<organism>
    <name type="scientific">Sphingopyxis alaskensis (strain DSM 13593 / LMG 18877 / RB2256)</name>
    <name type="common">Sphingomonas alaskensis</name>
    <dbReference type="NCBI Taxonomy" id="317655"/>
    <lineage>
        <taxon>Bacteria</taxon>
        <taxon>Pseudomonadati</taxon>
        <taxon>Pseudomonadota</taxon>
        <taxon>Alphaproteobacteria</taxon>
        <taxon>Sphingomonadales</taxon>
        <taxon>Sphingomonadaceae</taxon>
        <taxon>Sphingopyxis</taxon>
    </lineage>
</organism>
<gene>
    <name evidence="1" type="primary">rpsK</name>
    <name type="ordered locus">Sala_0566</name>
</gene>
<dbReference type="EMBL" id="CP000356">
    <property type="protein sequence ID" value="ABF52287.1"/>
    <property type="molecule type" value="Genomic_DNA"/>
</dbReference>
<dbReference type="RefSeq" id="WP_003040416.1">
    <property type="nucleotide sequence ID" value="NC_008048.1"/>
</dbReference>
<dbReference type="SMR" id="Q1GVN5"/>
<dbReference type="STRING" id="317655.Sala_0566"/>
<dbReference type="KEGG" id="sal:Sala_0566"/>
<dbReference type="eggNOG" id="COG0100">
    <property type="taxonomic scope" value="Bacteria"/>
</dbReference>
<dbReference type="HOGENOM" id="CLU_072439_5_0_5"/>
<dbReference type="OrthoDB" id="9806415at2"/>
<dbReference type="Proteomes" id="UP000006578">
    <property type="component" value="Chromosome"/>
</dbReference>
<dbReference type="GO" id="GO:1990904">
    <property type="term" value="C:ribonucleoprotein complex"/>
    <property type="evidence" value="ECO:0007669"/>
    <property type="project" value="UniProtKB-KW"/>
</dbReference>
<dbReference type="GO" id="GO:0005840">
    <property type="term" value="C:ribosome"/>
    <property type="evidence" value="ECO:0007669"/>
    <property type="project" value="UniProtKB-KW"/>
</dbReference>
<dbReference type="GO" id="GO:0019843">
    <property type="term" value="F:rRNA binding"/>
    <property type="evidence" value="ECO:0007669"/>
    <property type="project" value="UniProtKB-UniRule"/>
</dbReference>
<dbReference type="GO" id="GO:0003735">
    <property type="term" value="F:structural constituent of ribosome"/>
    <property type="evidence" value="ECO:0007669"/>
    <property type="project" value="InterPro"/>
</dbReference>
<dbReference type="GO" id="GO:0006412">
    <property type="term" value="P:translation"/>
    <property type="evidence" value="ECO:0007669"/>
    <property type="project" value="UniProtKB-UniRule"/>
</dbReference>
<dbReference type="FunFam" id="3.30.420.80:FF:000001">
    <property type="entry name" value="30S ribosomal protein S11"/>
    <property type="match status" value="1"/>
</dbReference>
<dbReference type="Gene3D" id="3.30.420.80">
    <property type="entry name" value="Ribosomal protein S11"/>
    <property type="match status" value="1"/>
</dbReference>
<dbReference type="HAMAP" id="MF_01310">
    <property type="entry name" value="Ribosomal_uS11"/>
    <property type="match status" value="1"/>
</dbReference>
<dbReference type="InterPro" id="IPR001971">
    <property type="entry name" value="Ribosomal_uS11"/>
</dbReference>
<dbReference type="InterPro" id="IPR019981">
    <property type="entry name" value="Ribosomal_uS11_bac-type"/>
</dbReference>
<dbReference type="InterPro" id="IPR018102">
    <property type="entry name" value="Ribosomal_uS11_CS"/>
</dbReference>
<dbReference type="InterPro" id="IPR036967">
    <property type="entry name" value="Ribosomal_uS11_sf"/>
</dbReference>
<dbReference type="NCBIfam" id="NF003698">
    <property type="entry name" value="PRK05309.1"/>
    <property type="match status" value="1"/>
</dbReference>
<dbReference type="NCBIfam" id="TIGR03632">
    <property type="entry name" value="uS11_bact"/>
    <property type="match status" value="1"/>
</dbReference>
<dbReference type="PANTHER" id="PTHR11759">
    <property type="entry name" value="40S RIBOSOMAL PROTEIN S14/30S RIBOSOMAL PROTEIN S11"/>
    <property type="match status" value="1"/>
</dbReference>
<dbReference type="Pfam" id="PF00411">
    <property type="entry name" value="Ribosomal_S11"/>
    <property type="match status" value="1"/>
</dbReference>
<dbReference type="PIRSF" id="PIRSF002131">
    <property type="entry name" value="Ribosomal_S11"/>
    <property type="match status" value="1"/>
</dbReference>
<dbReference type="SUPFAM" id="SSF53137">
    <property type="entry name" value="Translational machinery components"/>
    <property type="match status" value="1"/>
</dbReference>
<dbReference type="PROSITE" id="PS00054">
    <property type="entry name" value="RIBOSOMAL_S11"/>
    <property type="match status" value="1"/>
</dbReference>